<organism>
    <name type="scientific">Faba bean necrotic yellows C1 alphasatellite</name>
    <name type="common">FBNYC1A</name>
    <dbReference type="NCBI Taxonomy" id="1453080"/>
    <lineage>
        <taxon>Viruses</taxon>
        <taxon>Viruses incertae sedis</taxon>
        <taxon>Alphasatellitidae</taxon>
        <taxon>Nanoalphasatellitinae</taxon>
    </lineage>
</organism>
<reference key="1">
    <citation type="journal article" date="1995" name="J. Gen. Virol.">
        <title>Sequence analysis of a faba bean necrotic yellows virus DNA component containing a putative replicase gene.</title>
        <authorList>
            <person name="Katul L."/>
            <person name="Maiss E."/>
            <person name="Vetten V.J."/>
        </authorList>
    </citation>
    <scope>NUCLEOTIDE SEQUENCE [GENOMIC DNA]</scope>
</reference>
<reference key="2">
    <citation type="journal article" date="1999" name="J. Virol.">
        <title>A single Rep protein initiates replication of multiple genome components of faba bean necrotic yellows virus, a single-stranded DNA virus of plants.</title>
        <authorList>
            <person name="Timchenko T."/>
            <person name="de Kouchkovsky F."/>
            <person name="Katul L."/>
            <person name="David C."/>
            <person name="Vetten H.J."/>
            <person name="Gronenborn B."/>
        </authorList>
    </citation>
    <scope>FUNCTION</scope>
    <scope>MUTAGENESIS OF TYR-78 AND LYS-177</scope>
</reference>
<reference key="3">
    <citation type="journal article" date="2004" name="Vet. Microbiol.">
        <title>Nanoviruses: genome organisation and protein function.</title>
        <authorList>
            <person name="Gronenborn B."/>
        </authorList>
    </citation>
    <scope>REVIEW</scope>
</reference>
<protein>
    <recommendedName>
        <fullName>Para-Rep C1</fullName>
        <shortName>Rep1</shortName>
        <ecNumber>2.7.7.-</ecNumber>
        <ecNumber>3.1.21.-</ecNumber>
        <ecNumber>3.6.1.-</ecNumber>
    </recommendedName>
    <alternativeName>
        <fullName>ATP-dependent helicase C1</fullName>
    </alternativeName>
    <alternativeName>
        <fullName>Replication-associated protein of non-essential DNA C1</fullName>
    </alternativeName>
</protein>
<proteinExistence type="evidence at protein level"/>
<evidence type="ECO:0000250" key="1"/>
<evidence type="ECO:0000255" key="2"/>
<evidence type="ECO:0000255" key="3">
    <source>
        <dbReference type="PROSITE-ProRule" id="PRU01364"/>
    </source>
</evidence>
<evidence type="ECO:0000269" key="4">
    <source>
    </source>
</evidence>
<evidence type="ECO:0000305" key="5"/>
<sequence length="278" mass="32382">MACSNWVFTRNFQGALPLLSFDERVQYAVWQHERGTHDHIQGVIQLKKKARFSTVKEIIGGNPHVEKMKGTIEEASAYVQKEETRVAGPWSYGDLLKRGSHRRKTMERYLEDPEEMQLKDPDTALRCNAKRLKEDFMKEKTKLQLRPWQKELHDLILTEPDDRTIIWVYGPDGGEGKSMFAKELIKYGWFYTAGGKTQDILYMYAQDPERNIAFDVPRCSSEMMNYQAMEMMKNRCFASTKYRSVDLCCNKNVHLVVFANVAYDPTKISEDRIVIINC</sequence>
<name>REP1_FBNC1</name>
<accession>Q66862</accession>
<comment type="function">
    <text evidence="4">Initiates and terminates the replication only of its own subviral DNA molecule. The closed circular ssDNA genome is first converted to a superhelical dsDNA. Rep binds a specific hairpin at the genome origin of replication. Introduces an endonucleolytic nick within the intergenic region of the genome, thereby initiating the rolling circle replication (RCR). Following cleavage, binds covalently to the 5'-phosphate of DNA as a tyrosyl ester. The cleavage gives rise to a free 3'-OH that serves as a primer for the cellular DNA polymerase. The polymerase synthesizes the (+) strand DNA by rolling circle mechanism. After one round of replication, a Rep-catalyzed nucleotidyl transfer reaction releases a circular single-stranded virus genome, thereby terminating the replication. Displays origin-specific DNA cleavage, nucleotidyl transferase, ATPase and helicase activities.</text>
</comment>
<comment type="catalytic activity">
    <reaction>
        <text>ATP + H2O = ADP + phosphate + H(+)</text>
        <dbReference type="Rhea" id="RHEA:13065"/>
        <dbReference type="ChEBI" id="CHEBI:15377"/>
        <dbReference type="ChEBI" id="CHEBI:15378"/>
        <dbReference type="ChEBI" id="CHEBI:30616"/>
        <dbReference type="ChEBI" id="CHEBI:43474"/>
        <dbReference type="ChEBI" id="CHEBI:456216"/>
    </reaction>
</comment>
<comment type="cofactor">
    <cofactor evidence="1">
        <name>Mg(2+)</name>
        <dbReference type="ChEBI" id="CHEBI:18420"/>
    </cofactor>
    <cofactor evidence="1">
        <name>Mn(2+)</name>
        <dbReference type="ChEBI" id="CHEBI:29035"/>
    </cofactor>
    <text evidence="1">Divalent metal cations, possibly Mg(2+) or Mn(2+).</text>
</comment>
<comment type="subunit">
    <text evidence="1 5">Homooligomer (Potential). Rep binds to repeated DNA motifs (iterons) (By similarity).</text>
</comment>
<comment type="subcellular location">
    <subcellularLocation>
        <location evidence="5">Host nucleus</location>
    </subcellularLocation>
</comment>
<comment type="domain">
    <text>There are 3 rolling circle replication (RCR) motifs. RCR-2 is probably involved in metal coordination. RCR-3 is required for phosphodiester bond cleavage for initiation of RCR.</text>
</comment>
<comment type="miscellaneous">
    <text>The genome of nanoviruses is composed of six to eight segments. In addition, some isolates contain subviral DNAs.</text>
</comment>
<comment type="similarity">
    <text evidence="5">Belongs to the nanoviridea/circoviridae replication-associated protein family.</text>
</comment>
<comment type="caution">
    <text evidence="5">This protein is encoded by a subviral DNA that is not present in all isolates of the virus.</text>
</comment>
<gene>
    <name type="primary">C1</name>
    <name type="ORF">ORF1</name>
</gene>
<keyword id="KW-0067">ATP-binding</keyword>
<keyword id="KW-0190">Covalent protein-DNA linkage</keyword>
<keyword id="KW-0235">DNA replication</keyword>
<keyword id="KW-0238">DNA-binding</keyword>
<keyword id="KW-0255">Endonuclease</keyword>
<keyword id="KW-0347">Helicase</keyword>
<keyword id="KW-1048">Host nucleus</keyword>
<keyword id="KW-0378">Hydrolase</keyword>
<keyword id="KW-0479">Metal-binding</keyword>
<keyword id="KW-0511">Multifunctional enzyme</keyword>
<keyword id="KW-0540">Nuclease</keyword>
<keyword id="KW-0547">Nucleotide-binding</keyword>
<keyword id="KW-0548">Nucleotidyltransferase</keyword>
<keyword id="KW-1185">Reference proteome</keyword>
<keyword id="KW-0808">Transferase</keyword>
<feature type="chain" id="PRO_0000222439" description="Para-Rep C1">
    <location>
        <begin position="1"/>
        <end position="278"/>
    </location>
</feature>
<feature type="domain" description="CRESS-DNA virus Rep endonuclease" evidence="3">
    <location>
        <begin position="1"/>
        <end position="95"/>
    </location>
</feature>
<feature type="short sequence motif" description="RCR-1" evidence="1">
    <location>
        <begin position="8"/>
        <end position="11"/>
    </location>
</feature>
<feature type="short sequence motif" description="RCR-2" evidence="3">
    <location>
        <begin position="39"/>
        <end position="41"/>
    </location>
</feature>
<feature type="short sequence motif" description="Nuclear localization signal" evidence="2">
    <location>
        <begin position="48"/>
        <end position="69"/>
    </location>
</feature>
<feature type="short sequence motif" description="RCR-3" evidence="3">
    <location>
        <begin position="78"/>
        <end position="81"/>
    </location>
</feature>
<feature type="short sequence motif" description="Nuclear localization signal" evidence="2">
    <location>
        <begin position="95"/>
        <end position="101"/>
    </location>
</feature>
<feature type="active site" description="For DNA cleavage activity" evidence="3">
    <location>
        <position position="78"/>
    </location>
</feature>
<feature type="binding site" evidence="2">
    <location>
        <position position="33"/>
    </location>
    <ligand>
        <name>a divalent metal cation</name>
        <dbReference type="ChEBI" id="CHEBI:60240"/>
    </ligand>
</feature>
<feature type="binding site" evidence="2">
    <location>
        <position position="39"/>
    </location>
    <ligand>
        <name>a divalent metal cation</name>
        <dbReference type="ChEBI" id="CHEBI:60240"/>
    </ligand>
</feature>
<feature type="binding site" evidence="2">
    <location>
        <position position="83"/>
    </location>
    <ligand>
        <name>a divalent metal cation</name>
        <dbReference type="ChEBI" id="CHEBI:60240"/>
    </ligand>
</feature>
<feature type="binding site" evidence="5">
    <location>
        <begin position="176"/>
        <end position="178"/>
    </location>
    <ligand>
        <name>ATP</name>
        <dbReference type="ChEBI" id="CHEBI:30616"/>
    </ligand>
</feature>
<feature type="mutagenesis site" description="Complete loss of DNA cleavage and nucleotidyl transfer activity." evidence="4">
    <original>Y</original>
    <variation>F</variation>
    <location>
        <position position="78"/>
    </location>
</feature>
<feature type="mutagenesis site" description="Complete loss of ATPase activity." evidence="4">
    <original>K</original>
    <variation>A</variation>
    <location>
        <position position="177"/>
    </location>
</feature>
<dbReference type="EC" id="2.7.7.-"/>
<dbReference type="EC" id="3.1.21.-"/>
<dbReference type="EC" id="3.6.1.-"/>
<dbReference type="EMBL" id="X80879">
    <property type="protein sequence ID" value="CAA56847.1"/>
    <property type="molecule type" value="Genomic_DNA"/>
</dbReference>
<dbReference type="RefSeq" id="YP_009058890.1">
    <property type="nucleotide sequence ID" value="NC_024886.1"/>
</dbReference>
<dbReference type="SMR" id="Q66862"/>
<dbReference type="GeneID" id="20356976"/>
<dbReference type="KEGG" id="vg:20356976"/>
<dbReference type="Proteomes" id="UP000008666">
    <property type="component" value="Segment"/>
</dbReference>
<dbReference type="GO" id="GO:0042025">
    <property type="term" value="C:host cell nucleus"/>
    <property type="evidence" value="ECO:0007669"/>
    <property type="project" value="UniProtKB-SubCell"/>
</dbReference>
<dbReference type="GO" id="GO:0005524">
    <property type="term" value="F:ATP binding"/>
    <property type="evidence" value="ECO:0007669"/>
    <property type="project" value="UniProtKB-KW"/>
</dbReference>
<dbReference type="GO" id="GO:0016887">
    <property type="term" value="F:ATP hydrolysis activity"/>
    <property type="evidence" value="ECO:0000314"/>
    <property type="project" value="CACAO"/>
</dbReference>
<dbReference type="GO" id="GO:0003677">
    <property type="term" value="F:DNA binding"/>
    <property type="evidence" value="ECO:0007669"/>
    <property type="project" value="UniProtKB-KW"/>
</dbReference>
<dbReference type="GO" id="GO:0004519">
    <property type="term" value="F:endonuclease activity"/>
    <property type="evidence" value="ECO:0007669"/>
    <property type="project" value="UniProtKB-KW"/>
</dbReference>
<dbReference type="GO" id="GO:0046872">
    <property type="term" value="F:metal ion binding"/>
    <property type="evidence" value="ECO:0007669"/>
    <property type="project" value="UniProtKB-KW"/>
</dbReference>
<dbReference type="GO" id="GO:0016779">
    <property type="term" value="F:nucleotidyltransferase activity"/>
    <property type="evidence" value="ECO:0000314"/>
    <property type="project" value="CACAO"/>
</dbReference>
<dbReference type="GO" id="GO:0003723">
    <property type="term" value="F:RNA binding"/>
    <property type="evidence" value="ECO:0007669"/>
    <property type="project" value="InterPro"/>
</dbReference>
<dbReference type="GO" id="GO:0003724">
    <property type="term" value="F:RNA helicase activity"/>
    <property type="evidence" value="ECO:0007669"/>
    <property type="project" value="InterPro"/>
</dbReference>
<dbReference type="GO" id="GO:0006260">
    <property type="term" value="P:DNA replication"/>
    <property type="evidence" value="ECO:0007669"/>
    <property type="project" value="UniProtKB-KW"/>
</dbReference>
<dbReference type="FunFam" id="3.40.1310.20:FF:000002">
    <property type="entry name" value="Master replication protein"/>
    <property type="match status" value="1"/>
</dbReference>
<dbReference type="Gene3D" id="3.40.1310.20">
    <property type="match status" value="1"/>
</dbReference>
<dbReference type="InterPro" id="IPR049912">
    <property type="entry name" value="CRESS_DNA_REP"/>
</dbReference>
<dbReference type="InterPro" id="IPR000605">
    <property type="entry name" value="Helicase_SF3_ssDNA/RNA_vir"/>
</dbReference>
<dbReference type="Pfam" id="PF00910">
    <property type="entry name" value="RNA_helicase"/>
    <property type="match status" value="1"/>
</dbReference>
<dbReference type="Pfam" id="PF02407">
    <property type="entry name" value="Viral_Rep"/>
    <property type="match status" value="1"/>
</dbReference>
<dbReference type="PROSITE" id="PS52020">
    <property type="entry name" value="CRESS_DNA_REP"/>
    <property type="match status" value="1"/>
</dbReference>